<organism>
    <name type="scientific">Plasmopara halstedii</name>
    <name type="common">Downy mildew of sunflower</name>
    <dbReference type="NCBI Taxonomy" id="4781"/>
    <lineage>
        <taxon>Eukaryota</taxon>
        <taxon>Sar</taxon>
        <taxon>Stramenopiles</taxon>
        <taxon>Oomycota</taxon>
        <taxon>Peronosporales</taxon>
        <taxon>Peronosporaceae</taxon>
        <taxon>Plasmopara</taxon>
    </lineage>
</organism>
<sequence>MKAVKLTAAVVVLFMAPYVPITSSRSLAETPNDSIDRHLRHESAQIDSKLKEVEGKHDSNTPLQRRDQTLVAAHRVYDPVSGLACSLVGECMSCPITEKDESFCRETGYRQELACPHSKDEALLQTLEEKQTPRYRPCSPADTVRPGVTFVKFEAIMSLLLAISVTLLRREREKHMSSFDLRKDSRQRVGLLNSSASGVKDSD</sequence>
<accession>A0A0N7L4N2</accession>
<dbReference type="EMBL" id="CCYD01000349">
    <property type="protein sequence ID" value="CEG39147.1"/>
    <property type="molecule type" value="Genomic_DNA"/>
</dbReference>
<dbReference type="GlyCosmos" id="A0A0N7L4N2">
    <property type="glycosylation" value="2 sites, No reported glycans"/>
</dbReference>
<dbReference type="EnsemblProtists" id="CEG39147">
    <property type="protein sequence ID" value="CEG39147"/>
    <property type="gene ID" value="CEG39147"/>
</dbReference>
<dbReference type="OMA" id="QELACPH"/>
<dbReference type="OrthoDB" id="164912at2759"/>
<dbReference type="Proteomes" id="UP000054928">
    <property type="component" value="Unassembled WGS sequence"/>
</dbReference>
<dbReference type="GO" id="GO:0005576">
    <property type="term" value="C:extracellular region"/>
    <property type="evidence" value="ECO:0007669"/>
    <property type="project" value="UniProtKB-SubCell"/>
</dbReference>
<dbReference type="GO" id="GO:0030430">
    <property type="term" value="C:host cell cytoplasm"/>
    <property type="evidence" value="ECO:0007669"/>
    <property type="project" value="UniProtKB-SubCell"/>
</dbReference>
<keyword id="KW-0325">Glycoprotein</keyword>
<keyword id="KW-1035">Host cytoplasm</keyword>
<keyword id="KW-1185">Reference proteome</keyword>
<keyword id="KW-0964">Secreted</keyword>
<keyword id="KW-0732">Signal</keyword>
<keyword id="KW-0843">Virulence</keyword>
<name>RLR28_PLAHL</name>
<evidence type="ECO:0000255" key="1"/>
<evidence type="ECO:0000255" key="2">
    <source>
        <dbReference type="PROSITE-ProRule" id="PRU00498"/>
    </source>
</evidence>
<evidence type="ECO:0000269" key="3">
    <source>
    </source>
</evidence>
<evidence type="ECO:0000303" key="4">
    <source>
    </source>
</evidence>
<evidence type="ECO:0000305" key="5"/>
<evidence type="ECO:0000305" key="6">
    <source>
    </source>
</evidence>
<reference key="1">
    <citation type="journal article" date="2015" name="BMC Genomics">
        <title>Genome analyses of the sunflower pathogen Plasmopara halstedii provide insights into effector evolution in downy mildews and Phytophthora.</title>
        <authorList>
            <person name="Sharma R."/>
            <person name="Xia X."/>
            <person name="Cano L.M."/>
            <person name="Evangelisti E."/>
            <person name="Kemen E."/>
            <person name="Judelson H."/>
            <person name="Oome S."/>
            <person name="Sambles C."/>
            <person name="van den Hoogen D.J."/>
            <person name="Kitner M."/>
            <person name="Klein J."/>
            <person name="Meijer H.J."/>
            <person name="Spring O."/>
            <person name="Win J."/>
            <person name="Zipper R."/>
            <person name="Bode H.B."/>
            <person name="Govers F."/>
            <person name="Kamoun S."/>
            <person name="Schornack S."/>
            <person name="Studholme D.J."/>
            <person name="Van den Ackerveken G."/>
            <person name="Thines M."/>
        </authorList>
    </citation>
    <scope>NUCLEOTIDE SEQUENCE [LARGE SCALE GENOMIC DNA]</scope>
</reference>
<reference key="2">
    <citation type="journal article" date="2019" name="Plant J.">
        <title>Sunflower resistance to multiple downy mildew pathotypes revealed by recognition of conserved effectors of the oomycete Plasmopara halstedii.</title>
        <authorList>
            <person name="Pecrix Y."/>
            <person name="Buendia L."/>
            <person name="Penouilh-Suzette C."/>
            <person name="Marechaux M."/>
            <person name="Legrand L."/>
            <person name="Bouchez O."/>
            <person name="Rengel D."/>
            <person name="Gouzy J."/>
            <person name="Cottret L."/>
            <person name="Vear F."/>
            <person name="Godiard L."/>
        </authorList>
    </citation>
    <scope>DOMAIN</scope>
    <scope>INDUCTION</scope>
    <scope>FUNCTION</scope>
    <scope>SUBCELLULAR LOCATION</scope>
</reference>
<feature type="signal peptide" evidence="1">
    <location>
        <begin position="1"/>
        <end position="24"/>
    </location>
</feature>
<feature type="chain" id="PRO_5006015048" description="Secreted RxLR effector protein RXLR-C28">
    <location>
        <begin position="25"/>
        <end position="203"/>
    </location>
</feature>
<feature type="short sequence motif" description="RxLR" evidence="6">
    <location>
        <begin position="37"/>
        <end position="40"/>
    </location>
</feature>
<feature type="glycosylation site" description="N-linked (GlcNAc...) asparagine" evidence="2">
    <location>
        <position position="32"/>
    </location>
</feature>
<feature type="glycosylation site" description="N-linked (GlcNAc...) asparagine" evidence="2">
    <location>
        <position position="193"/>
    </location>
</feature>
<comment type="function">
    <text evidence="3">Secreted effector that does not suppress pattern-triggered immunity (PTI) in plant host.</text>
</comment>
<comment type="subcellular location">
    <subcellularLocation>
        <location evidence="3">Secreted</location>
    </subcellularLocation>
    <subcellularLocation>
        <location evidence="3">Host cytoplasm</location>
    </subcellularLocation>
</comment>
<comment type="induction">
    <text evidence="3">Expression is up-regulated during the late plant infection stages.</text>
</comment>
<comment type="domain">
    <text evidence="6">Has the canonical translocation RxLR motif, but lacks the canonical EER motif, which characterizes most oomycete effectors identified so far.</text>
</comment>
<comment type="similarity">
    <text evidence="5">Belongs to the RxLR effector family.</text>
</comment>
<proteinExistence type="evidence at transcript level"/>
<protein>
    <recommendedName>
        <fullName evidence="4">Secreted RxLR effector protein RXLR-C28</fullName>
    </recommendedName>
</protein>
<gene>
    <name evidence="4" type="primary">RXLR-C28</name>
</gene>